<dbReference type="EC" id="2.1.1.74" evidence="1"/>
<dbReference type="EMBL" id="CP000264">
    <property type="protein sequence ID" value="ABD55415.1"/>
    <property type="molecule type" value="Genomic_DNA"/>
</dbReference>
<dbReference type="RefSeq" id="WP_011455619.1">
    <property type="nucleotide sequence ID" value="NC_007802.1"/>
</dbReference>
<dbReference type="SMR" id="Q28PE7"/>
<dbReference type="STRING" id="290400.Jann_2498"/>
<dbReference type="KEGG" id="jan:Jann_2498"/>
<dbReference type="eggNOG" id="COG1206">
    <property type="taxonomic scope" value="Bacteria"/>
</dbReference>
<dbReference type="HOGENOM" id="CLU_033057_1_0_5"/>
<dbReference type="OrthoDB" id="9803114at2"/>
<dbReference type="Proteomes" id="UP000008326">
    <property type="component" value="Chromosome"/>
</dbReference>
<dbReference type="GO" id="GO:0005829">
    <property type="term" value="C:cytosol"/>
    <property type="evidence" value="ECO:0007669"/>
    <property type="project" value="TreeGrafter"/>
</dbReference>
<dbReference type="GO" id="GO:0050660">
    <property type="term" value="F:flavin adenine dinucleotide binding"/>
    <property type="evidence" value="ECO:0007669"/>
    <property type="project" value="UniProtKB-UniRule"/>
</dbReference>
<dbReference type="GO" id="GO:0047151">
    <property type="term" value="F:tRNA (uracil(54)-C5)-methyltransferase activity, 5,10-methylenetetrahydrofolate-dependent"/>
    <property type="evidence" value="ECO:0007669"/>
    <property type="project" value="UniProtKB-UniRule"/>
</dbReference>
<dbReference type="GO" id="GO:0030488">
    <property type="term" value="P:tRNA methylation"/>
    <property type="evidence" value="ECO:0007669"/>
    <property type="project" value="TreeGrafter"/>
</dbReference>
<dbReference type="GO" id="GO:0002098">
    <property type="term" value="P:tRNA wobble uridine modification"/>
    <property type="evidence" value="ECO:0007669"/>
    <property type="project" value="TreeGrafter"/>
</dbReference>
<dbReference type="Gene3D" id="3.50.50.60">
    <property type="entry name" value="FAD/NAD(P)-binding domain"/>
    <property type="match status" value="2"/>
</dbReference>
<dbReference type="HAMAP" id="MF_01037">
    <property type="entry name" value="TrmFO"/>
    <property type="match status" value="1"/>
</dbReference>
<dbReference type="InterPro" id="IPR036188">
    <property type="entry name" value="FAD/NAD-bd_sf"/>
</dbReference>
<dbReference type="InterPro" id="IPR002218">
    <property type="entry name" value="MnmG-rel"/>
</dbReference>
<dbReference type="InterPro" id="IPR020595">
    <property type="entry name" value="MnmG-rel_CS"/>
</dbReference>
<dbReference type="InterPro" id="IPR040131">
    <property type="entry name" value="MnmG_N"/>
</dbReference>
<dbReference type="InterPro" id="IPR004417">
    <property type="entry name" value="TrmFO"/>
</dbReference>
<dbReference type="NCBIfam" id="TIGR00137">
    <property type="entry name" value="gid_trmFO"/>
    <property type="match status" value="1"/>
</dbReference>
<dbReference type="NCBIfam" id="NF003739">
    <property type="entry name" value="PRK05335.1"/>
    <property type="match status" value="1"/>
</dbReference>
<dbReference type="PANTHER" id="PTHR11806">
    <property type="entry name" value="GLUCOSE INHIBITED DIVISION PROTEIN A"/>
    <property type="match status" value="1"/>
</dbReference>
<dbReference type="PANTHER" id="PTHR11806:SF2">
    <property type="entry name" value="METHYLENETETRAHYDROFOLATE--TRNA-(URACIL-5-)-METHYLTRANSFERASE TRMFO"/>
    <property type="match status" value="1"/>
</dbReference>
<dbReference type="Pfam" id="PF01134">
    <property type="entry name" value="GIDA"/>
    <property type="match status" value="1"/>
</dbReference>
<dbReference type="PRINTS" id="PR00411">
    <property type="entry name" value="PNDRDTASEI"/>
</dbReference>
<dbReference type="SUPFAM" id="SSF51905">
    <property type="entry name" value="FAD/NAD(P)-binding domain"/>
    <property type="match status" value="1"/>
</dbReference>
<dbReference type="PROSITE" id="PS01281">
    <property type="entry name" value="GIDA_2"/>
    <property type="match status" value="1"/>
</dbReference>
<evidence type="ECO:0000255" key="1">
    <source>
        <dbReference type="HAMAP-Rule" id="MF_01037"/>
    </source>
</evidence>
<keyword id="KW-0963">Cytoplasm</keyword>
<keyword id="KW-0274">FAD</keyword>
<keyword id="KW-0285">Flavoprotein</keyword>
<keyword id="KW-0489">Methyltransferase</keyword>
<keyword id="KW-0520">NAD</keyword>
<keyword id="KW-0521">NADP</keyword>
<keyword id="KW-1185">Reference proteome</keyword>
<keyword id="KW-0808">Transferase</keyword>
<keyword id="KW-0819">tRNA processing</keyword>
<sequence>MTQNTQLTIIGGGMAGSEAAWQAANLGVNVRLIEMRPKVETFAHRTGNLAEMVCSNSFRSDDSEQNAVGLLHWEMRAANSVIMHTADSHKLPAGGALAVDRDPFAEAVTAKLHAHPNIEITYGEVTDLPAAGPTIIATGPLTGSALADAIAREAGQDALAFFDAIAPIVYADSIDMDIAWRQSRYDKGDTLEEQQAYINCPLTRDQYEAFIDALLSADKTQFKDGETAGYFDGCLPIEVMAERGRETLRFGPMKPVGLTNPHDPQTKAYAVVQLRRDNALGTLYNIVGFQTKMTYGAQKQVFAMIPGLQEASFARLGGIHRNTFINSPTLLDDQMRLRSKPHIRFAGQITGVEGYVESASMGLLAGRMAAAEILGETLPDLPDTTAMGALVTHITGGADAKTFQPMNVNFGLFPPVEGLKGGRRGRKDRYKAYTDRAKAAWTNWLTPQTSLGGSQAAE</sequence>
<comment type="function">
    <text evidence="1">Catalyzes the folate-dependent formation of 5-methyl-uridine at position 54 (M-5-U54) in all tRNAs.</text>
</comment>
<comment type="catalytic activity">
    <reaction evidence="1">
        <text>uridine(54) in tRNA + (6R)-5,10-methylene-5,6,7,8-tetrahydrofolate + NADH + H(+) = 5-methyluridine(54) in tRNA + (6S)-5,6,7,8-tetrahydrofolate + NAD(+)</text>
        <dbReference type="Rhea" id="RHEA:16873"/>
        <dbReference type="Rhea" id="RHEA-COMP:10167"/>
        <dbReference type="Rhea" id="RHEA-COMP:10193"/>
        <dbReference type="ChEBI" id="CHEBI:15378"/>
        <dbReference type="ChEBI" id="CHEBI:15636"/>
        <dbReference type="ChEBI" id="CHEBI:57453"/>
        <dbReference type="ChEBI" id="CHEBI:57540"/>
        <dbReference type="ChEBI" id="CHEBI:57945"/>
        <dbReference type="ChEBI" id="CHEBI:65315"/>
        <dbReference type="ChEBI" id="CHEBI:74447"/>
        <dbReference type="EC" id="2.1.1.74"/>
    </reaction>
</comment>
<comment type="catalytic activity">
    <reaction evidence="1">
        <text>uridine(54) in tRNA + (6R)-5,10-methylene-5,6,7,8-tetrahydrofolate + NADPH + H(+) = 5-methyluridine(54) in tRNA + (6S)-5,6,7,8-tetrahydrofolate + NADP(+)</text>
        <dbReference type="Rhea" id="RHEA:62372"/>
        <dbReference type="Rhea" id="RHEA-COMP:10167"/>
        <dbReference type="Rhea" id="RHEA-COMP:10193"/>
        <dbReference type="ChEBI" id="CHEBI:15378"/>
        <dbReference type="ChEBI" id="CHEBI:15636"/>
        <dbReference type="ChEBI" id="CHEBI:57453"/>
        <dbReference type="ChEBI" id="CHEBI:57783"/>
        <dbReference type="ChEBI" id="CHEBI:58349"/>
        <dbReference type="ChEBI" id="CHEBI:65315"/>
        <dbReference type="ChEBI" id="CHEBI:74447"/>
        <dbReference type="EC" id="2.1.1.74"/>
    </reaction>
</comment>
<comment type="cofactor">
    <cofactor evidence="1">
        <name>FAD</name>
        <dbReference type="ChEBI" id="CHEBI:57692"/>
    </cofactor>
</comment>
<comment type="subcellular location">
    <subcellularLocation>
        <location evidence="1">Cytoplasm</location>
    </subcellularLocation>
</comment>
<comment type="similarity">
    <text evidence="1">Belongs to the MnmG family. TrmFO subfamily.</text>
</comment>
<gene>
    <name evidence="1" type="primary">trmFO</name>
    <name type="ordered locus">Jann_2498</name>
</gene>
<organism>
    <name type="scientific">Jannaschia sp. (strain CCS1)</name>
    <dbReference type="NCBI Taxonomy" id="290400"/>
    <lineage>
        <taxon>Bacteria</taxon>
        <taxon>Pseudomonadati</taxon>
        <taxon>Pseudomonadota</taxon>
        <taxon>Alphaproteobacteria</taxon>
        <taxon>Rhodobacterales</taxon>
        <taxon>Roseobacteraceae</taxon>
        <taxon>Jannaschia</taxon>
    </lineage>
</organism>
<reference key="1">
    <citation type="submission" date="2006-02" db="EMBL/GenBank/DDBJ databases">
        <title>Complete sequence of chromosome of Jannaschia sp. CCS1.</title>
        <authorList>
            <consortium name="US DOE Joint Genome Institute"/>
            <person name="Copeland A."/>
            <person name="Lucas S."/>
            <person name="Lapidus A."/>
            <person name="Barry K."/>
            <person name="Detter J.C."/>
            <person name="Glavina del Rio T."/>
            <person name="Hammon N."/>
            <person name="Israni S."/>
            <person name="Pitluck S."/>
            <person name="Brettin T."/>
            <person name="Bruce D."/>
            <person name="Han C."/>
            <person name="Tapia R."/>
            <person name="Gilna P."/>
            <person name="Chertkov O."/>
            <person name="Saunders E."/>
            <person name="Schmutz J."/>
            <person name="Larimer F."/>
            <person name="Land M."/>
            <person name="Kyrpides N."/>
            <person name="Lykidis A."/>
            <person name="Moran M.A."/>
            <person name="Belas R."/>
            <person name="Ye W."/>
            <person name="Buchan A."/>
            <person name="Gonzalez J.M."/>
            <person name="Schell M.A."/>
            <person name="Richardson P."/>
        </authorList>
    </citation>
    <scope>NUCLEOTIDE SEQUENCE [LARGE SCALE GENOMIC DNA]</scope>
    <source>
        <strain>CCS1</strain>
    </source>
</reference>
<protein>
    <recommendedName>
        <fullName evidence="1">Methylenetetrahydrofolate--tRNA-(uracil-5-)-methyltransferase TrmFO</fullName>
        <ecNumber evidence="1">2.1.1.74</ecNumber>
    </recommendedName>
    <alternativeName>
        <fullName evidence="1">Folate-dependent tRNA (uracil-5-)-methyltransferase</fullName>
    </alternativeName>
    <alternativeName>
        <fullName evidence="1">Folate-dependent tRNA(M-5-U54)-methyltransferase</fullName>
    </alternativeName>
</protein>
<accession>Q28PE7</accession>
<proteinExistence type="inferred from homology"/>
<name>TRMFO_JANSC</name>
<feature type="chain" id="PRO_0000346345" description="Methylenetetrahydrofolate--tRNA-(uracil-5-)-methyltransferase TrmFO">
    <location>
        <begin position="1"/>
        <end position="458"/>
    </location>
</feature>
<feature type="binding site" evidence="1">
    <location>
        <begin position="11"/>
        <end position="16"/>
    </location>
    <ligand>
        <name>FAD</name>
        <dbReference type="ChEBI" id="CHEBI:57692"/>
    </ligand>
</feature>